<evidence type="ECO:0000250" key="1"/>
<evidence type="ECO:0000305" key="2"/>
<reference key="1">
    <citation type="journal article" date="2004" name="Nature">
        <title>Genome evolution in yeasts.</title>
        <authorList>
            <person name="Dujon B."/>
            <person name="Sherman D."/>
            <person name="Fischer G."/>
            <person name="Durrens P."/>
            <person name="Casaregola S."/>
            <person name="Lafontaine I."/>
            <person name="de Montigny J."/>
            <person name="Marck C."/>
            <person name="Neuveglise C."/>
            <person name="Talla E."/>
            <person name="Goffard N."/>
            <person name="Frangeul L."/>
            <person name="Aigle M."/>
            <person name="Anthouard V."/>
            <person name="Babour A."/>
            <person name="Barbe V."/>
            <person name="Barnay S."/>
            <person name="Blanchin S."/>
            <person name="Beckerich J.-M."/>
            <person name="Beyne E."/>
            <person name="Bleykasten C."/>
            <person name="Boisrame A."/>
            <person name="Boyer J."/>
            <person name="Cattolico L."/>
            <person name="Confanioleri F."/>
            <person name="de Daruvar A."/>
            <person name="Despons L."/>
            <person name="Fabre E."/>
            <person name="Fairhead C."/>
            <person name="Ferry-Dumazet H."/>
            <person name="Groppi A."/>
            <person name="Hantraye F."/>
            <person name="Hennequin C."/>
            <person name="Jauniaux N."/>
            <person name="Joyet P."/>
            <person name="Kachouri R."/>
            <person name="Kerrest A."/>
            <person name="Koszul R."/>
            <person name="Lemaire M."/>
            <person name="Lesur I."/>
            <person name="Ma L."/>
            <person name="Muller H."/>
            <person name="Nicaud J.-M."/>
            <person name="Nikolski M."/>
            <person name="Oztas S."/>
            <person name="Ozier-Kalogeropoulos O."/>
            <person name="Pellenz S."/>
            <person name="Potier S."/>
            <person name="Richard G.-F."/>
            <person name="Straub M.-L."/>
            <person name="Suleau A."/>
            <person name="Swennen D."/>
            <person name="Tekaia F."/>
            <person name="Wesolowski-Louvel M."/>
            <person name="Westhof E."/>
            <person name="Wirth B."/>
            <person name="Zeniou-Meyer M."/>
            <person name="Zivanovic Y."/>
            <person name="Bolotin-Fukuhara M."/>
            <person name="Thierry A."/>
            <person name="Bouchier C."/>
            <person name="Caudron B."/>
            <person name="Scarpelli C."/>
            <person name="Gaillardin C."/>
            <person name="Weissenbach J."/>
            <person name="Wincker P."/>
            <person name="Souciet J.-L."/>
        </authorList>
    </citation>
    <scope>NUCLEOTIDE SEQUENCE [LARGE SCALE GENOMIC DNA]</scope>
    <source>
        <strain>ATCC 36239 / CBS 767 / BCRC 21394 / JCM 1990 / NBRC 0083 / IGC 2968</strain>
    </source>
</reference>
<sequence>MKPIELCTLRGHLNDITCTEPYYIGGKVSLVSADSNGWIIWWDINTRRPNCVWKGHDSNIVTLRQICNGLLLTHSKDSDIKIWDVENFKSGSREMPAEKYNNVQYFSIDRDGEEDNNVSKNELLEAFPLPENVVIPVNALNYCNVDYSNHHLITPATTDSNNFDLYSIFKPSHQTDESLEAKLNLKRVAANIDPWKLYKKTITQLNKEQGVEFEIGNENDILKRDKFGIMMKVLFVRDDLFYIGYESGHLIGYHIDFSGAINNENEGAKSDSVKPDKNVSGLAGLFGNKTKSFDKTIINKDPHIKMIYMNDSCSPYPIISLVYDNKENKIICGSAGKQLTFHKIPEEFSQFNDISDCKRYNLRHSGIQSVSINNSLLVVGFWDGLIKGYDLDLNELFKYCKRLPRIDVLESNSGQQQPREKQNSIKLCTVKLVIPNETDVVKSNDYKSLIKHKRDITTTNLLISSYYDGTITIFKV</sequence>
<accession>Q6BPL7</accession>
<name>ASA1_DEBHA</name>
<protein>
    <recommendedName>
        <fullName>ASTRA-associated protein 1</fullName>
    </recommendedName>
</protein>
<feature type="chain" id="PRO_0000402210" description="ASTRA-associated protein 1">
    <location>
        <begin position="1"/>
        <end position="476"/>
    </location>
</feature>
<feature type="repeat" description="WD 1">
    <location>
        <begin position="11"/>
        <end position="52"/>
    </location>
</feature>
<feature type="repeat" description="WD 2">
    <location>
        <begin position="55"/>
        <end position="93"/>
    </location>
</feature>
<feature type="repeat" description="WD 3">
    <location>
        <begin position="132"/>
        <end position="176"/>
    </location>
</feature>
<feature type="repeat" description="WD 4">
    <location>
        <begin position="313"/>
        <end position="352"/>
    </location>
</feature>
<feature type="repeat" description="WD 5">
    <location>
        <begin position="362"/>
        <end position="399"/>
    </location>
</feature>
<feature type="repeat" description="WD 6">
    <location>
        <begin position="441"/>
        <end position="476"/>
    </location>
</feature>
<gene>
    <name type="primary">ASA1</name>
    <name type="ordered locus">DEHA2E12606g</name>
</gene>
<proteinExistence type="inferred from homology"/>
<organism>
    <name type="scientific">Debaryomyces hansenii (strain ATCC 36239 / CBS 767 / BCRC 21394 / JCM 1990 / NBRC 0083 / IGC 2968)</name>
    <name type="common">Yeast</name>
    <name type="synonym">Torulaspora hansenii</name>
    <dbReference type="NCBI Taxonomy" id="284592"/>
    <lineage>
        <taxon>Eukaryota</taxon>
        <taxon>Fungi</taxon>
        <taxon>Dikarya</taxon>
        <taxon>Ascomycota</taxon>
        <taxon>Saccharomycotina</taxon>
        <taxon>Pichiomycetes</taxon>
        <taxon>Debaryomycetaceae</taxon>
        <taxon>Debaryomyces</taxon>
    </lineage>
</organism>
<keyword id="KW-0156">Chromatin regulator</keyword>
<keyword id="KW-0539">Nucleus</keyword>
<keyword id="KW-1185">Reference proteome</keyword>
<keyword id="KW-0677">Repeat</keyword>
<keyword id="KW-0853">WD repeat</keyword>
<comment type="function">
    <text evidence="1">Component of the ASTRA complex involved in chromatin remodeling.</text>
</comment>
<comment type="subunit">
    <text evidence="1">Component of the ASTRA chromatin remodeling machinery complex.</text>
</comment>
<comment type="subcellular location">
    <subcellularLocation>
        <location evidence="1">Nucleus</location>
    </subcellularLocation>
</comment>
<comment type="similarity">
    <text evidence="2">Belongs to the WD repeat ASA1 family.</text>
</comment>
<dbReference type="EMBL" id="CR382137">
    <property type="protein sequence ID" value="CAG88094.2"/>
    <property type="molecule type" value="Genomic_DNA"/>
</dbReference>
<dbReference type="RefSeq" id="XP_459853.2">
    <property type="nucleotide sequence ID" value="XM_459853.1"/>
</dbReference>
<dbReference type="FunCoup" id="Q6BPL7">
    <property type="interactions" value="58"/>
</dbReference>
<dbReference type="STRING" id="284592.Q6BPL7"/>
<dbReference type="GeneID" id="2902675"/>
<dbReference type="KEGG" id="dha:DEHA2E12606g"/>
<dbReference type="VEuPathDB" id="FungiDB:DEHA2E12606g"/>
<dbReference type="eggNOG" id="KOG0322">
    <property type="taxonomic scope" value="Eukaryota"/>
</dbReference>
<dbReference type="HOGENOM" id="CLU_045414_0_0_1"/>
<dbReference type="InParanoid" id="Q6BPL7"/>
<dbReference type="OMA" id="WHNSENG"/>
<dbReference type="OrthoDB" id="7668193at2759"/>
<dbReference type="Proteomes" id="UP000000599">
    <property type="component" value="Chromosome E"/>
</dbReference>
<dbReference type="GO" id="GO:0005634">
    <property type="term" value="C:nucleus"/>
    <property type="evidence" value="ECO:0007669"/>
    <property type="project" value="UniProtKB-SubCell"/>
</dbReference>
<dbReference type="GO" id="GO:0006325">
    <property type="term" value="P:chromatin organization"/>
    <property type="evidence" value="ECO:0007669"/>
    <property type="project" value="UniProtKB-KW"/>
</dbReference>
<dbReference type="Gene3D" id="2.130.10.10">
    <property type="entry name" value="YVTN repeat-like/Quinoprotein amine dehydrogenase"/>
    <property type="match status" value="1"/>
</dbReference>
<dbReference type="InterPro" id="IPR015943">
    <property type="entry name" value="WD40/YVTN_repeat-like_dom_sf"/>
</dbReference>
<dbReference type="InterPro" id="IPR036322">
    <property type="entry name" value="WD40_repeat_dom_sf"/>
</dbReference>
<dbReference type="InterPro" id="IPR001680">
    <property type="entry name" value="WD40_rpt"/>
</dbReference>
<dbReference type="PANTHER" id="PTHR19854:SF1">
    <property type="entry name" value="GUANINE NUCLEOTIDE-BINDING PROTEIN SUBUNIT BETA-LIKE PROTEIN 1"/>
    <property type="match status" value="1"/>
</dbReference>
<dbReference type="PANTHER" id="PTHR19854">
    <property type="entry name" value="TRANSDUCIN BETA-LIKE 3"/>
    <property type="match status" value="1"/>
</dbReference>
<dbReference type="SMART" id="SM00320">
    <property type="entry name" value="WD40"/>
    <property type="match status" value="5"/>
</dbReference>
<dbReference type="SUPFAM" id="SSF50978">
    <property type="entry name" value="WD40 repeat-like"/>
    <property type="match status" value="1"/>
</dbReference>
<dbReference type="PROSITE" id="PS50082">
    <property type="entry name" value="WD_REPEATS_2"/>
    <property type="match status" value="1"/>
</dbReference>
<dbReference type="PROSITE" id="PS50294">
    <property type="entry name" value="WD_REPEATS_REGION"/>
    <property type="match status" value="1"/>
</dbReference>